<keyword id="KW-0963">Cytoplasm</keyword>
<keyword id="KW-0274">FAD</keyword>
<keyword id="KW-0285">Flavoprotein</keyword>
<keyword id="KW-0520">NAD</keyword>
<keyword id="KW-0521">NADP</keyword>
<keyword id="KW-0560">Oxidoreductase</keyword>
<keyword id="KW-1185">Reference proteome</keyword>
<protein>
    <recommendedName>
        <fullName evidence="1">Soluble pyridine nucleotide transhydrogenase</fullName>
        <shortName evidence="1">STH</shortName>
        <ecNumber evidence="1">1.6.1.1</ecNumber>
    </recommendedName>
    <alternativeName>
        <fullName evidence="1">NAD(P)(+) transhydrogenase [B-specific]</fullName>
    </alternativeName>
</protein>
<gene>
    <name evidence="1" type="primary">sthA</name>
    <name evidence="1" type="synonym">udhA</name>
    <name type="ordered locus">ECS88_4419</name>
</gene>
<sequence>MPHSYDYDAIVIGSGPGGEGAAMGLVKQGARVAVIERYQNVGGGCTHWGTIPSKALRHAVSRIIEFNQNPLYSDHSRLLRSSFADILNHADNVINQQTRMRQGFYERNHCEILQGNARFVDEHTLALDCPDGSVETLTAEKFVIACGSRPYHPTDVDFTHPRIYDSDSILSMHHEPRHVLIYGAGVIGCEYASIFRGMDVKVDLINTRDRLLAFLDQEMSDSLSYHFWNSGVVIRHNEEYEKIEGCDDGVIMHLKSGKKLKADCLLYANGRTGNTDSLALQNIGLETDSRGQLKVNSMYQTAQPHVYAVGDVIGYPSLASAAYDQGRIAAQALVKGEATAHLIEDIPTGIYTIPEISSVGKTEQQLTAMKVPYEVGRAQFKHLARAQIVGMNVGTLKILFHRETKEILGIHCFGERAAEIIHIGQAIMEQKGGGNTIEYFVNTTFNYPTMAEAYRVAALNGLNRLF</sequence>
<dbReference type="EC" id="1.6.1.1" evidence="1"/>
<dbReference type="EMBL" id="CU928161">
    <property type="protein sequence ID" value="CAR05598.1"/>
    <property type="molecule type" value="Genomic_DNA"/>
</dbReference>
<dbReference type="RefSeq" id="WP_001120810.1">
    <property type="nucleotide sequence ID" value="NC_011742.1"/>
</dbReference>
<dbReference type="SMR" id="B7MIA0"/>
<dbReference type="GeneID" id="75203206"/>
<dbReference type="KEGG" id="ecz:ECS88_4419"/>
<dbReference type="HOGENOM" id="CLU_016755_0_0_6"/>
<dbReference type="Proteomes" id="UP000000747">
    <property type="component" value="Chromosome"/>
</dbReference>
<dbReference type="GO" id="GO:0005829">
    <property type="term" value="C:cytosol"/>
    <property type="evidence" value="ECO:0007669"/>
    <property type="project" value="TreeGrafter"/>
</dbReference>
<dbReference type="GO" id="GO:0004148">
    <property type="term" value="F:dihydrolipoyl dehydrogenase (NADH) activity"/>
    <property type="evidence" value="ECO:0007669"/>
    <property type="project" value="TreeGrafter"/>
</dbReference>
<dbReference type="GO" id="GO:0050660">
    <property type="term" value="F:flavin adenine dinucleotide binding"/>
    <property type="evidence" value="ECO:0007669"/>
    <property type="project" value="TreeGrafter"/>
</dbReference>
<dbReference type="GO" id="GO:0003957">
    <property type="term" value="F:NAD(P)+ transhydrogenase (Si-specific) activity"/>
    <property type="evidence" value="ECO:0007669"/>
    <property type="project" value="UniProtKB-UniRule"/>
</dbReference>
<dbReference type="GO" id="GO:0006103">
    <property type="term" value="P:2-oxoglutarate metabolic process"/>
    <property type="evidence" value="ECO:0007669"/>
    <property type="project" value="TreeGrafter"/>
</dbReference>
<dbReference type="GO" id="GO:0006739">
    <property type="term" value="P:NADP metabolic process"/>
    <property type="evidence" value="ECO:0007669"/>
    <property type="project" value="UniProtKB-UniRule"/>
</dbReference>
<dbReference type="FunFam" id="3.30.390.30:FF:000002">
    <property type="entry name" value="Soluble pyridine nucleotide transhydrogenase"/>
    <property type="match status" value="1"/>
</dbReference>
<dbReference type="FunFam" id="3.50.50.60:FF:000008">
    <property type="entry name" value="Soluble pyridine nucleotide transhydrogenase"/>
    <property type="match status" value="1"/>
</dbReference>
<dbReference type="Gene3D" id="3.30.390.30">
    <property type="match status" value="1"/>
</dbReference>
<dbReference type="Gene3D" id="3.50.50.60">
    <property type="entry name" value="FAD/NAD(P)-binding domain"/>
    <property type="match status" value="2"/>
</dbReference>
<dbReference type="HAMAP" id="MF_00247">
    <property type="entry name" value="SthA"/>
    <property type="match status" value="1"/>
</dbReference>
<dbReference type="InterPro" id="IPR050151">
    <property type="entry name" value="Class-I_Pyr_Nuc-Dis_Oxidored"/>
</dbReference>
<dbReference type="InterPro" id="IPR036188">
    <property type="entry name" value="FAD/NAD-bd_sf"/>
</dbReference>
<dbReference type="InterPro" id="IPR023753">
    <property type="entry name" value="FAD/NAD-binding_dom"/>
</dbReference>
<dbReference type="InterPro" id="IPR016156">
    <property type="entry name" value="FAD/NAD-linked_Rdtase_dimer_sf"/>
</dbReference>
<dbReference type="InterPro" id="IPR001100">
    <property type="entry name" value="Pyr_nuc-diS_OxRdtase"/>
</dbReference>
<dbReference type="InterPro" id="IPR004099">
    <property type="entry name" value="Pyr_nucl-diS_OxRdtase_dimer"/>
</dbReference>
<dbReference type="InterPro" id="IPR022962">
    <property type="entry name" value="STH_gammaproteobact"/>
</dbReference>
<dbReference type="NCBIfam" id="NF003585">
    <property type="entry name" value="PRK05249.1"/>
    <property type="match status" value="1"/>
</dbReference>
<dbReference type="PANTHER" id="PTHR22912">
    <property type="entry name" value="DISULFIDE OXIDOREDUCTASE"/>
    <property type="match status" value="1"/>
</dbReference>
<dbReference type="PANTHER" id="PTHR22912:SF93">
    <property type="entry name" value="SOLUBLE PYRIDINE NUCLEOTIDE TRANSHYDROGENASE"/>
    <property type="match status" value="1"/>
</dbReference>
<dbReference type="Pfam" id="PF07992">
    <property type="entry name" value="Pyr_redox_2"/>
    <property type="match status" value="1"/>
</dbReference>
<dbReference type="Pfam" id="PF02852">
    <property type="entry name" value="Pyr_redox_dim"/>
    <property type="match status" value="1"/>
</dbReference>
<dbReference type="PIRSF" id="PIRSF000350">
    <property type="entry name" value="Mercury_reductase_MerA"/>
    <property type="match status" value="1"/>
</dbReference>
<dbReference type="PRINTS" id="PR00368">
    <property type="entry name" value="FADPNR"/>
</dbReference>
<dbReference type="PRINTS" id="PR00411">
    <property type="entry name" value="PNDRDTASEI"/>
</dbReference>
<dbReference type="SUPFAM" id="SSF51905">
    <property type="entry name" value="FAD/NAD(P)-binding domain"/>
    <property type="match status" value="1"/>
</dbReference>
<dbReference type="SUPFAM" id="SSF55424">
    <property type="entry name" value="FAD/NAD-linked reductases, dimerisation (C-terminal) domain"/>
    <property type="match status" value="1"/>
</dbReference>
<feature type="chain" id="PRO_1000193452" description="Soluble pyridine nucleotide transhydrogenase">
    <location>
        <begin position="1"/>
        <end position="466"/>
    </location>
</feature>
<feature type="binding site" evidence="1">
    <location>
        <begin position="36"/>
        <end position="45"/>
    </location>
    <ligand>
        <name>FAD</name>
        <dbReference type="ChEBI" id="CHEBI:57692"/>
    </ligand>
</feature>
<name>STHA_ECO45</name>
<accession>B7MIA0</accession>
<organism>
    <name type="scientific">Escherichia coli O45:K1 (strain S88 / ExPEC)</name>
    <dbReference type="NCBI Taxonomy" id="585035"/>
    <lineage>
        <taxon>Bacteria</taxon>
        <taxon>Pseudomonadati</taxon>
        <taxon>Pseudomonadota</taxon>
        <taxon>Gammaproteobacteria</taxon>
        <taxon>Enterobacterales</taxon>
        <taxon>Enterobacteriaceae</taxon>
        <taxon>Escherichia</taxon>
    </lineage>
</organism>
<evidence type="ECO:0000255" key="1">
    <source>
        <dbReference type="HAMAP-Rule" id="MF_00247"/>
    </source>
</evidence>
<comment type="function">
    <text evidence="1">Conversion of NADPH, generated by peripheral catabolic pathways, to NADH, which can enter the respiratory chain for energy generation.</text>
</comment>
<comment type="catalytic activity">
    <reaction evidence="1">
        <text>NAD(+) + NADPH = NADH + NADP(+)</text>
        <dbReference type="Rhea" id="RHEA:11692"/>
        <dbReference type="ChEBI" id="CHEBI:57540"/>
        <dbReference type="ChEBI" id="CHEBI:57783"/>
        <dbReference type="ChEBI" id="CHEBI:57945"/>
        <dbReference type="ChEBI" id="CHEBI:58349"/>
        <dbReference type="EC" id="1.6.1.1"/>
    </reaction>
</comment>
<comment type="cofactor">
    <cofactor evidence="1">
        <name>FAD</name>
        <dbReference type="ChEBI" id="CHEBI:57692"/>
    </cofactor>
    <text evidence="1">Binds 1 FAD per subunit.</text>
</comment>
<comment type="subcellular location">
    <subcellularLocation>
        <location evidence="1">Cytoplasm</location>
    </subcellularLocation>
</comment>
<comment type="similarity">
    <text evidence="1">Belongs to the class-I pyridine nucleotide-disulfide oxidoreductase family.</text>
</comment>
<reference key="1">
    <citation type="journal article" date="2009" name="PLoS Genet.">
        <title>Organised genome dynamics in the Escherichia coli species results in highly diverse adaptive paths.</title>
        <authorList>
            <person name="Touchon M."/>
            <person name="Hoede C."/>
            <person name="Tenaillon O."/>
            <person name="Barbe V."/>
            <person name="Baeriswyl S."/>
            <person name="Bidet P."/>
            <person name="Bingen E."/>
            <person name="Bonacorsi S."/>
            <person name="Bouchier C."/>
            <person name="Bouvet O."/>
            <person name="Calteau A."/>
            <person name="Chiapello H."/>
            <person name="Clermont O."/>
            <person name="Cruveiller S."/>
            <person name="Danchin A."/>
            <person name="Diard M."/>
            <person name="Dossat C."/>
            <person name="Karoui M.E."/>
            <person name="Frapy E."/>
            <person name="Garry L."/>
            <person name="Ghigo J.M."/>
            <person name="Gilles A.M."/>
            <person name="Johnson J."/>
            <person name="Le Bouguenec C."/>
            <person name="Lescat M."/>
            <person name="Mangenot S."/>
            <person name="Martinez-Jehanne V."/>
            <person name="Matic I."/>
            <person name="Nassif X."/>
            <person name="Oztas S."/>
            <person name="Petit M.A."/>
            <person name="Pichon C."/>
            <person name="Rouy Z."/>
            <person name="Ruf C.S."/>
            <person name="Schneider D."/>
            <person name="Tourret J."/>
            <person name="Vacherie B."/>
            <person name="Vallenet D."/>
            <person name="Medigue C."/>
            <person name="Rocha E.P.C."/>
            <person name="Denamur E."/>
        </authorList>
    </citation>
    <scope>NUCLEOTIDE SEQUENCE [LARGE SCALE GENOMIC DNA]</scope>
    <source>
        <strain>S88 / ExPEC</strain>
    </source>
</reference>
<proteinExistence type="inferred from homology"/>